<organism>
    <name type="scientific">Monocentropus balfouri</name>
    <name type="common">Socotra Island blue baboon tarantula</name>
    <dbReference type="NCBI Taxonomy" id="2053173"/>
    <lineage>
        <taxon>Eukaryota</taxon>
        <taxon>Metazoa</taxon>
        <taxon>Ecdysozoa</taxon>
        <taxon>Arthropoda</taxon>
        <taxon>Chelicerata</taxon>
        <taxon>Arachnida</taxon>
        <taxon>Araneae</taxon>
        <taxon>Mygalomorphae</taxon>
        <taxon>Theraphosidae</taxon>
        <taxon>Monocentropus</taxon>
    </lineage>
</organism>
<dbReference type="SMR" id="P0DUC1"/>
<dbReference type="GO" id="GO:0005576">
    <property type="term" value="C:extracellular region"/>
    <property type="evidence" value="ECO:0007669"/>
    <property type="project" value="UniProtKB-SubCell"/>
</dbReference>
<dbReference type="GO" id="GO:0005246">
    <property type="term" value="F:calcium channel regulator activity"/>
    <property type="evidence" value="ECO:0007669"/>
    <property type="project" value="UniProtKB-KW"/>
</dbReference>
<dbReference type="GO" id="GO:0008200">
    <property type="term" value="F:ion channel inhibitor activity"/>
    <property type="evidence" value="ECO:0007669"/>
    <property type="project" value="InterPro"/>
</dbReference>
<dbReference type="GO" id="GO:0017080">
    <property type="term" value="F:sodium channel regulator activity"/>
    <property type="evidence" value="ECO:0007669"/>
    <property type="project" value="UniProtKB-KW"/>
</dbReference>
<dbReference type="GO" id="GO:0090729">
    <property type="term" value="F:toxin activity"/>
    <property type="evidence" value="ECO:0007669"/>
    <property type="project" value="UniProtKB-KW"/>
</dbReference>
<dbReference type="InterPro" id="IPR011696">
    <property type="entry name" value="Huwentoxin-1"/>
</dbReference>
<dbReference type="Pfam" id="PF07740">
    <property type="entry name" value="Toxin_12"/>
    <property type="match status" value="1"/>
</dbReference>
<dbReference type="SUPFAM" id="SSF57059">
    <property type="entry name" value="omega toxin-like"/>
    <property type="match status" value="1"/>
</dbReference>
<feature type="chain" id="PRO_0000451471" description="Mu/omega-theraphotoxin-Mb1a" evidence="2">
    <location>
        <begin position="1"/>
        <end position="38"/>
    </location>
</feature>
<feature type="site" description="Responsible for the inhibition of BgNaV1 fast inactivation" evidence="2">
    <location>
        <begin position="37"/>
        <end position="38"/>
    </location>
</feature>
<feature type="modified residue" description="Threonine amide" evidence="2">
    <location>
        <position position="38"/>
    </location>
</feature>
<feature type="disulfide bond" evidence="1">
    <location>
        <begin position="7"/>
        <end position="21"/>
    </location>
</feature>
<feature type="disulfide bond" evidence="1">
    <location>
        <begin position="14"/>
        <end position="26"/>
    </location>
</feature>
<feature type="disulfide bond" evidence="1">
    <location>
        <begin position="20"/>
        <end position="33"/>
    </location>
</feature>
<reference key="1">
    <citation type="journal article" date="2017" name="Toxins">
        <title>Insect-active toxins with promiscuous pharmacology from the african theraphosid spider Monocentropus balfouri.</title>
        <authorList>
            <person name="Smith J.J."/>
            <person name="Herzig V."/>
            <person name="Ikonomopoulou M.P."/>
            <person name="Dziemborowicz S."/>
            <person name="Bosmans F."/>
            <person name="Nicholson G.M."/>
            <person name="King G.F."/>
        </authorList>
    </citation>
    <scope>PROTEIN SEQUENCE</scope>
    <scope>FUNCTION</scope>
    <scope>AMIDATION AT THR-38</scope>
    <scope>MASS SPECTROMETRY</scope>
    <scope>SUBCELLULAR LOCATION</scope>
    <scope>RECOMBINANT EXPRESSION</scope>
    <scope>TOXIC DOSE</scope>
    <scope>BIOASSAY</scope>
    <source>
        <tissue>Venom</tissue>
    </source>
</reference>
<protein>
    <recommendedName>
        <fullName evidence="5">Mu/omega-theraphotoxin-Mb1a</fullName>
        <shortName evidence="3">Mu/omega-TRTX-Mb1a</shortName>
    </recommendedName>
</protein>
<evidence type="ECO:0000250" key="1">
    <source>
        <dbReference type="UniProtKB" id="P0DM12"/>
    </source>
</evidence>
<evidence type="ECO:0000269" key="2">
    <source>
    </source>
</evidence>
<evidence type="ECO:0000303" key="3">
    <source>
    </source>
</evidence>
<evidence type="ECO:0000305" key="4"/>
<evidence type="ECO:0000305" key="5">
    <source>
    </source>
</evidence>
<sequence>GVDKPGCRYMFGGCVQDDDCCPHLGCKRKGLYCAWDGT</sequence>
<proteinExistence type="evidence at protein level"/>
<accession>P0DUC1</accession>
<name>TX1A_MONBA</name>
<comment type="function">
    <text evidence="2">Paralytic toxin that inhibits insect voltage-gated sodium (Nav) and calcium (Cav) channels in P.americana (American cockroach) dorsal unpaired median (DUM) neurons, and inhibits the B.germanica (German cockroach) Nav channel (BgNaV1) (PubMed:28475112). Also shows a delay in fast inactivation when tested on BgNaV1 (PubMed:28475112). May act as a gating-modifier toxin on Nav and as a pore blocker on Cav (PubMed:28475112). In vivo, reversibly paralyzes both L.cuprina (Australian sheep blowfly) and M.domestica (housefly), but does not affect larvae of H.armigera (cotton bollworms) (PubMed:28475112).</text>
</comment>
<comment type="subcellular location">
    <subcellularLocation>
        <location evidence="2">Secreted</location>
    </subcellularLocation>
</comment>
<comment type="tissue specificity">
    <text evidence="5">Expressed by the venom gland.</text>
</comment>
<comment type="domain">
    <text evidence="1">The presence of a 'disulfide through disulfide knot' structurally defines this protein as a knottin.</text>
</comment>
<comment type="mass spectrometry"/>
<comment type="toxic dose">
    <text evidence="2">PD(50) is 5.8+-0.5 nmol/g when intra-thoracically injected into L.cuprina blowflies (at 30 minutes post-injection).</text>
</comment>
<comment type="toxic dose">
    <text evidence="2">PD(50) is 5.9+-0.4 nmol/g when intra-thoracically injected into L.cuprina blowflies (at 1 hour post-injection).</text>
</comment>
<comment type="toxic dose">
    <text evidence="2">PD(50) is 8.5+-0.9 nmol/g when intra-thoracically injected into L.cuprina blowflies (at 2 hours post-injection).</text>
</comment>
<comment type="miscellaneous">
    <text evidence="2">Possibly exists in two forms, due to cis-trans isomerization of Pro-5 or Pro-22.</text>
</comment>
<comment type="similarity">
    <text evidence="4">Belongs to the neurotoxin 10 (Hwtx-1) family. 28 (Jztx-11) subfamily.</text>
</comment>
<keyword id="KW-0027">Amidation</keyword>
<keyword id="KW-0108">Calcium channel impairing toxin</keyword>
<keyword id="KW-0903">Direct protein sequencing</keyword>
<keyword id="KW-1015">Disulfide bond</keyword>
<keyword id="KW-0872">Ion channel impairing toxin</keyword>
<keyword id="KW-0960">Knottin</keyword>
<keyword id="KW-0528">Neurotoxin</keyword>
<keyword id="KW-0964">Secreted</keyword>
<keyword id="KW-0800">Toxin</keyword>
<keyword id="KW-1218">Voltage-gated calcium channel impairing toxin</keyword>
<keyword id="KW-0738">Voltage-gated sodium channel impairing toxin</keyword>